<organism>
    <name type="scientific">Escherichia coli O6:H1 (strain CFT073 / ATCC 700928 / UPEC)</name>
    <dbReference type="NCBI Taxonomy" id="199310"/>
    <lineage>
        <taxon>Bacteria</taxon>
        <taxon>Pseudomonadati</taxon>
        <taxon>Pseudomonadota</taxon>
        <taxon>Gammaproteobacteria</taxon>
        <taxon>Enterobacterales</taxon>
        <taxon>Enterobacteriaceae</taxon>
        <taxon>Escherichia</taxon>
    </lineage>
</organism>
<evidence type="ECO:0000305" key="1"/>
<name>LPFS_ECOL6</name>
<feature type="peptide" id="PRO_0000044611" description="Putative fruR/shl operon leader peptide">
    <location>
        <begin position="1"/>
        <end position="28"/>
    </location>
</feature>
<comment type="caution">
    <text evidence="1">Could be the product of a pseudogene.</text>
</comment>
<reference key="1">
    <citation type="journal article" date="2002" name="Proc. Natl. Acad. Sci. U.S.A.">
        <title>Extensive mosaic structure revealed by the complete genome sequence of uropathogenic Escherichia coli.</title>
        <authorList>
            <person name="Welch R.A."/>
            <person name="Burland V."/>
            <person name="Plunkett G. III"/>
            <person name="Redford P."/>
            <person name="Roesch P."/>
            <person name="Rasko D."/>
            <person name="Buckles E.L."/>
            <person name="Liou S.-R."/>
            <person name="Boutin A."/>
            <person name="Hackett J."/>
            <person name="Stroud D."/>
            <person name="Mayhew G.F."/>
            <person name="Rose D.J."/>
            <person name="Zhou S."/>
            <person name="Schwartz D.C."/>
            <person name="Perna N.T."/>
            <person name="Mobley H.L.T."/>
            <person name="Donnenberg M.S."/>
            <person name="Blattner F.R."/>
        </authorList>
    </citation>
    <scope>NUCLEOTIDE SEQUENCE [LARGE SCALE GENOMIC DNA]</scope>
    <source>
        <strain>CFT073 / ATCC 700928 / UPEC</strain>
    </source>
</reference>
<accession>P0ADF1</accession>
<accession>P22183</accession>
<sequence length="28" mass="3291">MRNLQPNMSRWAFFAKSVGTWNKSSCRS</sequence>
<proteinExistence type="uncertain"/>
<protein>
    <recommendedName>
        <fullName>Putative fruR/shl operon leader peptide</fullName>
    </recommendedName>
</protein>
<dbReference type="EMBL" id="AE014075">
    <property type="protein sequence ID" value="AAN78594.1"/>
    <property type="molecule type" value="Genomic_DNA"/>
</dbReference>
<dbReference type="RefSeq" id="WP_001303787.1">
    <property type="nucleotide sequence ID" value="NZ_CP051263.1"/>
</dbReference>
<dbReference type="KEGG" id="ecc:c5493"/>
<dbReference type="eggNOG" id="ENOG502ZRX1">
    <property type="taxonomic scope" value="Bacteria"/>
</dbReference>
<dbReference type="HOGENOM" id="CLU_3412513_0_0_6"/>
<dbReference type="BioCyc" id="ECOL199310:C5493-MONOMER"/>
<dbReference type="Proteomes" id="UP000001410">
    <property type="component" value="Chromosome"/>
</dbReference>
<gene>
    <name type="primary">fruL</name>
    <name type="ordered locus">c5493</name>
</gene>
<keyword id="KW-1185">Reference proteome</keyword>